<protein>
    <recommendedName>
        <fullName evidence="1">Exodeoxyribonuclease 7 large subunit</fullName>
        <ecNumber evidence="1">3.1.11.6</ecNumber>
    </recommendedName>
    <alternativeName>
        <fullName evidence="1">Exodeoxyribonuclease VII large subunit</fullName>
        <shortName evidence="1">Exonuclease VII large subunit</shortName>
    </alternativeName>
</protein>
<organism>
    <name type="scientific">Escherichia coli (strain 55989 / EAEC)</name>
    <dbReference type="NCBI Taxonomy" id="585055"/>
    <lineage>
        <taxon>Bacteria</taxon>
        <taxon>Pseudomonadati</taxon>
        <taxon>Pseudomonadota</taxon>
        <taxon>Gammaproteobacteria</taxon>
        <taxon>Enterobacterales</taxon>
        <taxon>Enterobacteriaceae</taxon>
        <taxon>Escherichia</taxon>
    </lineage>
</organism>
<accession>B7LCP9</accession>
<gene>
    <name evidence="1" type="primary">xseA</name>
    <name type="ordered locus">EC55989_2794</name>
</gene>
<feature type="chain" id="PRO_1000200669" description="Exodeoxyribonuclease 7 large subunit">
    <location>
        <begin position="1"/>
        <end position="456"/>
    </location>
</feature>
<sequence>MLPSQSPAIFTVSRLNQTVRLLLEHEMGQVWISGEISNFTQPASGHWYFTLKDDTAQVRCAMFRNSNRRVTFRPQHGQQVLVRANITLYEPRGDYQIIVESMQPAGEGLLQQKYEQLKAKLQAEGLFDQQYKKPLPSPAHCVGVITSKTGAALHDILHVLKRRDPSLPVIIYPTAVQGDDAPGQIVRAIELANQRNECDVLIVGRGGGSLEDLWSFNDERVARAIFASRIPVVSAVGHETDVTIADFVADLRAPTPSAAAEVVSRNQQELLRQVQSTRQRLEMAMDYYLANRTRRFTQIHHRLQQQHPQLRLARQQTMLERLQKRMSFALENQLKRTGQQQQRLTQRLNQQNPQPKIHRAQTRIQQLEYRLAETLRVQLSATRERFGNAVTHLEAVSPLSTLARGYSVTTATDGNVLKKVKQVKAGEMLTTRLEDGWIESEVKNIQPVKKSRKKVH</sequence>
<dbReference type="EC" id="3.1.11.6" evidence="1"/>
<dbReference type="EMBL" id="CU928145">
    <property type="protein sequence ID" value="CAU98667.1"/>
    <property type="molecule type" value="Genomic_DNA"/>
</dbReference>
<dbReference type="RefSeq" id="WP_000937933.1">
    <property type="nucleotide sequence ID" value="NC_011748.1"/>
</dbReference>
<dbReference type="SMR" id="B7LCP9"/>
<dbReference type="GeneID" id="93774627"/>
<dbReference type="KEGG" id="eck:EC55989_2794"/>
<dbReference type="HOGENOM" id="CLU_023625_3_1_6"/>
<dbReference type="Proteomes" id="UP000000746">
    <property type="component" value="Chromosome"/>
</dbReference>
<dbReference type="GO" id="GO:0005737">
    <property type="term" value="C:cytoplasm"/>
    <property type="evidence" value="ECO:0007669"/>
    <property type="project" value="UniProtKB-SubCell"/>
</dbReference>
<dbReference type="GO" id="GO:0009318">
    <property type="term" value="C:exodeoxyribonuclease VII complex"/>
    <property type="evidence" value="ECO:0007669"/>
    <property type="project" value="InterPro"/>
</dbReference>
<dbReference type="GO" id="GO:0008855">
    <property type="term" value="F:exodeoxyribonuclease VII activity"/>
    <property type="evidence" value="ECO:0007669"/>
    <property type="project" value="UniProtKB-UniRule"/>
</dbReference>
<dbReference type="GO" id="GO:0003676">
    <property type="term" value="F:nucleic acid binding"/>
    <property type="evidence" value="ECO:0007669"/>
    <property type="project" value="InterPro"/>
</dbReference>
<dbReference type="GO" id="GO:0006308">
    <property type="term" value="P:DNA catabolic process"/>
    <property type="evidence" value="ECO:0007669"/>
    <property type="project" value="UniProtKB-UniRule"/>
</dbReference>
<dbReference type="CDD" id="cd04489">
    <property type="entry name" value="ExoVII_LU_OBF"/>
    <property type="match status" value="1"/>
</dbReference>
<dbReference type="HAMAP" id="MF_00378">
    <property type="entry name" value="Exonuc_7_L"/>
    <property type="match status" value="1"/>
</dbReference>
<dbReference type="InterPro" id="IPR003753">
    <property type="entry name" value="Exonuc_VII_L"/>
</dbReference>
<dbReference type="InterPro" id="IPR020579">
    <property type="entry name" value="Exonuc_VII_lsu_C"/>
</dbReference>
<dbReference type="InterPro" id="IPR025824">
    <property type="entry name" value="OB-fold_nuc-bd_dom"/>
</dbReference>
<dbReference type="NCBIfam" id="TIGR00237">
    <property type="entry name" value="xseA"/>
    <property type="match status" value="1"/>
</dbReference>
<dbReference type="PANTHER" id="PTHR30008">
    <property type="entry name" value="EXODEOXYRIBONUCLEASE 7 LARGE SUBUNIT"/>
    <property type="match status" value="1"/>
</dbReference>
<dbReference type="PANTHER" id="PTHR30008:SF0">
    <property type="entry name" value="EXODEOXYRIBONUCLEASE 7 LARGE SUBUNIT"/>
    <property type="match status" value="1"/>
</dbReference>
<dbReference type="Pfam" id="PF02601">
    <property type="entry name" value="Exonuc_VII_L"/>
    <property type="match status" value="1"/>
</dbReference>
<dbReference type="Pfam" id="PF13742">
    <property type="entry name" value="tRNA_anti_2"/>
    <property type="match status" value="1"/>
</dbReference>
<keyword id="KW-0963">Cytoplasm</keyword>
<keyword id="KW-0269">Exonuclease</keyword>
<keyword id="KW-0378">Hydrolase</keyword>
<keyword id="KW-0540">Nuclease</keyword>
<keyword id="KW-1185">Reference proteome</keyword>
<comment type="function">
    <text evidence="1">Bidirectionally degrades single-stranded DNA into large acid-insoluble oligonucleotides, which are then degraded further into small acid-soluble oligonucleotides.</text>
</comment>
<comment type="catalytic activity">
    <reaction evidence="1">
        <text>Exonucleolytic cleavage in either 5'- to 3'- or 3'- to 5'-direction to yield nucleoside 5'-phosphates.</text>
        <dbReference type="EC" id="3.1.11.6"/>
    </reaction>
</comment>
<comment type="subunit">
    <text evidence="1">Heterooligomer composed of large and small subunits.</text>
</comment>
<comment type="subcellular location">
    <subcellularLocation>
        <location evidence="1">Cytoplasm</location>
    </subcellularLocation>
</comment>
<comment type="similarity">
    <text evidence="1">Belongs to the XseA family.</text>
</comment>
<name>EX7L_ECO55</name>
<evidence type="ECO:0000255" key="1">
    <source>
        <dbReference type="HAMAP-Rule" id="MF_00378"/>
    </source>
</evidence>
<reference key="1">
    <citation type="journal article" date="2009" name="PLoS Genet.">
        <title>Organised genome dynamics in the Escherichia coli species results in highly diverse adaptive paths.</title>
        <authorList>
            <person name="Touchon M."/>
            <person name="Hoede C."/>
            <person name="Tenaillon O."/>
            <person name="Barbe V."/>
            <person name="Baeriswyl S."/>
            <person name="Bidet P."/>
            <person name="Bingen E."/>
            <person name="Bonacorsi S."/>
            <person name="Bouchier C."/>
            <person name="Bouvet O."/>
            <person name="Calteau A."/>
            <person name="Chiapello H."/>
            <person name="Clermont O."/>
            <person name="Cruveiller S."/>
            <person name="Danchin A."/>
            <person name="Diard M."/>
            <person name="Dossat C."/>
            <person name="Karoui M.E."/>
            <person name="Frapy E."/>
            <person name="Garry L."/>
            <person name="Ghigo J.M."/>
            <person name="Gilles A.M."/>
            <person name="Johnson J."/>
            <person name="Le Bouguenec C."/>
            <person name="Lescat M."/>
            <person name="Mangenot S."/>
            <person name="Martinez-Jehanne V."/>
            <person name="Matic I."/>
            <person name="Nassif X."/>
            <person name="Oztas S."/>
            <person name="Petit M.A."/>
            <person name="Pichon C."/>
            <person name="Rouy Z."/>
            <person name="Ruf C.S."/>
            <person name="Schneider D."/>
            <person name="Tourret J."/>
            <person name="Vacherie B."/>
            <person name="Vallenet D."/>
            <person name="Medigue C."/>
            <person name="Rocha E.P.C."/>
            <person name="Denamur E."/>
        </authorList>
    </citation>
    <scope>NUCLEOTIDE SEQUENCE [LARGE SCALE GENOMIC DNA]</scope>
    <source>
        <strain>55989 / EAEC</strain>
    </source>
</reference>
<proteinExistence type="inferred from homology"/>